<proteinExistence type="evidence at protein level"/>
<dbReference type="EMBL" id="AE000513">
    <property type="protein sequence ID" value="AAF10747.1"/>
    <property type="molecule type" value="Genomic_DNA"/>
</dbReference>
<dbReference type="PIR" id="B75429">
    <property type="entry name" value="B75429"/>
</dbReference>
<dbReference type="RefSeq" id="NP_294896.1">
    <property type="nucleotide sequence ID" value="NC_001263.1"/>
</dbReference>
<dbReference type="RefSeq" id="WP_010887815.1">
    <property type="nucleotide sequence ID" value="NC_001263.1"/>
</dbReference>
<dbReference type="SMR" id="Q9RV58"/>
<dbReference type="STRING" id="243230.DR_1172"/>
<dbReference type="PaxDb" id="243230-DR_1172"/>
<dbReference type="EnsemblBacteria" id="AAF10747">
    <property type="protein sequence ID" value="AAF10747"/>
    <property type="gene ID" value="DR_1172"/>
</dbReference>
<dbReference type="GeneID" id="69517419"/>
<dbReference type="KEGG" id="dra:DR_1172"/>
<dbReference type="PATRIC" id="fig|243230.17.peg.1370"/>
<dbReference type="eggNOG" id="COG5412">
    <property type="taxonomic scope" value="Bacteria"/>
</dbReference>
<dbReference type="HOGENOM" id="CLU_081231_0_0_0"/>
<dbReference type="InParanoid" id="Q9RV58"/>
<dbReference type="OrthoDB" id="71714at2"/>
<dbReference type="Proteomes" id="UP000002524">
    <property type="component" value="Chromosome 1"/>
</dbReference>
<dbReference type="GO" id="GO:0044183">
    <property type="term" value="F:protein folding chaperone"/>
    <property type="evidence" value="ECO:0000314"/>
    <property type="project" value="DisProt"/>
</dbReference>
<dbReference type="Gene3D" id="1.20.120.20">
    <property type="entry name" value="Apolipoprotein"/>
    <property type="match status" value="1"/>
</dbReference>
<dbReference type="Gene3D" id="1.10.287.700">
    <property type="entry name" value="Helix hairpin bin"/>
    <property type="match status" value="1"/>
</dbReference>
<dbReference type="PANTHER" id="PTHR47372">
    <property type="entry name" value="DAUER UP-REGULATED-RELATED"/>
    <property type="match status" value="1"/>
</dbReference>
<dbReference type="PANTHER" id="PTHR47372:SF11">
    <property type="entry name" value="RE19971P"/>
    <property type="match status" value="1"/>
</dbReference>
<dbReference type="SUPFAM" id="SSF58113">
    <property type="entry name" value="Apolipoprotein A-I"/>
    <property type="match status" value="1"/>
</dbReference>
<name>UB72_DEIRA</name>
<keyword id="KW-0903">Direct protein sequencing</keyword>
<keyword id="KW-1185">Reference proteome</keyword>
<keyword id="KW-0677">Repeat</keyword>
<accession>Q9RV58</accession>
<protein>
    <recommendedName>
        <fullName>Protein DR_1172</fullName>
    </recommendedName>
</protein>
<feature type="chain" id="PRO_0000221232" description="Protein DR_1172">
    <location>
        <begin position="1"/>
        <end position="298"/>
    </location>
</feature>
<feature type="repeat" description="LEA-like 1">
    <location>
        <begin position="48"/>
        <end position="117"/>
    </location>
</feature>
<feature type="repeat" description="LEA-like 2">
    <location>
        <begin position="128"/>
        <end position="197"/>
    </location>
</feature>
<feature type="repeat" description="LEA-like 3">
    <location>
        <begin position="201"/>
        <end position="270"/>
    </location>
</feature>
<feature type="region of interest" description="Disordered" evidence="1">
    <location>
        <begin position="174"/>
        <end position="298"/>
    </location>
</feature>
<feature type="compositionally biased region" description="Basic and acidic residues" evidence="1">
    <location>
        <begin position="174"/>
        <end position="193"/>
    </location>
</feature>
<feature type="compositionally biased region" description="Low complexity" evidence="1">
    <location>
        <begin position="194"/>
        <end position="208"/>
    </location>
</feature>
<feature type="compositionally biased region" description="Basic and acidic residues" evidence="1">
    <location>
        <begin position="209"/>
        <end position="233"/>
    </location>
</feature>
<feature type="compositionally biased region" description="Low complexity" evidence="1">
    <location>
        <begin position="275"/>
        <end position="298"/>
    </location>
</feature>
<organism>
    <name type="scientific">Deinococcus radiodurans (strain ATCC 13939 / DSM 20539 / JCM 16871 / CCUG 27074 / LMG 4051 / NBRC 15346 / NCIMB 9279 / VKM B-1422 / R1)</name>
    <dbReference type="NCBI Taxonomy" id="243230"/>
    <lineage>
        <taxon>Bacteria</taxon>
        <taxon>Thermotogati</taxon>
        <taxon>Deinococcota</taxon>
        <taxon>Deinococci</taxon>
        <taxon>Deinococcales</taxon>
        <taxon>Deinococcaceae</taxon>
        <taxon>Deinococcus</taxon>
    </lineage>
</organism>
<sequence length="298" mass="30930">MFERDEHHFPVKRLLLLGALVGAGAYYLSREQNRKALDAKLAELGLKDAAQDVGSSVTKGWEKTKDAAQNAGSVIADKAQDVAGEVKSAVAGATAEIKDAGKEVADTAKDAGQNVGQNVKREAADLADQAKDKAQDVKADVSKAADQAKDKAQDVAQNVQAGAQQAAANVKDKVQDVKADASKAADQAKDKAQDVAQNVKQGAQQAASDAKDKVQDVKADASRAADQAKDKAQDVAQNVKQSAQDAKTDVDAKAKSWAFDLRTDAEAGKQGGQTGSTTNNAGTAGNTGMTGNTNTRKN</sequence>
<comment type="similarity">
    <text evidence="2">Belongs to the LEA type 1 family.</text>
</comment>
<gene>
    <name type="ordered locus">DR_1172</name>
</gene>
<evidence type="ECO:0000256" key="1">
    <source>
        <dbReference type="SAM" id="MobiDB-lite"/>
    </source>
</evidence>
<evidence type="ECO:0000305" key="2"/>
<reference key="1">
    <citation type="journal article" date="1999" name="Science">
        <title>Genome sequence of the radioresistant bacterium Deinococcus radiodurans R1.</title>
        <authorList>
            <person name="White O."/>
            <person name="Eisen J.A."/>
            <person name="Heidelberg J.F."/>
            <person name="Hickey E.K."/>
            <person name="Peterson J.D."/>
            <person name="Dodson R.J."/>
            <person name="Haft D.H."/>
            <person name="Gwinn M.L."/>
            <person name="Nelson W.C."/>
            <person name="Richardson D.L."/>
            <person name="Moffat K.S."/>
            <person name="Qin H."/>
            <person name="Jiang L."/>
            <person name="Pamphile W."/>
            <person name="Crosby M."/>
            <person name="Shen M."/>
            <person name="Vamathevan J.J."/>
            <person name="Lam P."/>
            <person name="McDonald L.A."/>
            <person name="Utterback T.R."/>
            <person name="Zalewski C."/>
            <person name="Makarova K.S."/>
            <person name="Aravind L."/>
            <person name="Daly M.J."/>
            <person name="Minton K.W."/>
            <person name="Fleischmann R.D."/>
            <person name="Ketchum K.A."/>
            <person name="Nelson K.E."/>
            <person name="Salzberg S.L."/>
            <person name="Smith H.O."/>
            <person name="Venter J.C."/>
            <person name="Fraser C.M."/>
        </authorList>
    </citation>
    <scope>NUCLEOTIDE SEQUENCE [LARGE SCALE GENOMIC DNA]</scope>
    <source>
        <strain>ATCC 13939 / DSM 20539 / JCM 16871 / CCUG 27074 / LMG 4051 / NBRC 15346 / NCIMB 9279 / VKM B-1422 / R1</strain>
    </source>
</reference>
<reference key="2">
    <citation type="journal article" date="2004" name="Biochem. Biophys. Res. Commun.">
        <title>Protein recycling is a major component of post-irradiation recovery in Deinococcus radiodurans strain R1.</title>
        <authorList>
            <person name="Joshi B.S."/>
            <person name="Schmid R."/>
            <person name="Altendorf K."/>
            <person name="Apte S.K."/>
        </authorList>
    </citation>
    <scope>PROTEIN SEQUENCE OF 1-15</scope>
    <source>
        <strain>ATCC 13939 / DSM 20539 / JCM 16871 / CCUG 27074 / LMG 4051 / NBRC 15346 / NCIMB 9279 / VKM B-1422 / R1</strain>
    </source>
</reference>